<keyword id="KW-0028">Amino-acid biosynthesis</keyword>
<keyword id="KW-0055">Arginine biosynthesis</keyword>
<keyword id="KW-0472">Membrane</keyword>
<keyword id="KW-0496">Mitochondrion</keyword>
<keyword id="KW-0999">Mitochondrion inner membrane</keyword>
<keyword id="KW-1185">Reference proteome</keyword>
<keyword id="KW-0677">Repeat</keyword>
<keyword id="KW-0812">Transmembrane</keyword>
<keyword id="KW-1133">Transmembrane helix</keyword>
<keyword id="KW-0813">Transport</keyword>
<evidence type="ECO:0000255" key="1"/>
<evidence type="ECO:0000269" key="2">
    <source>
    </source>
</evidence>
<evidence type="ECO:0000269" key="3">
    <source>
    </source>
</evidence>
<evidence type="ECO:0000269" key="4">
    <source>
    </source>
</evidence>
<evidence type="ECO:0000305" key="5"/>
<dbReference type="EMBL" id="X87414">
    <property type="protein sequence ID" value="CAA60862.1"/>
    <property type="molecule type" value="Genomic_DNA"/>
</dbReference>
<dbReference type="EMBL" id="X90518">
    <property type="protein sequence ID" value="CAA62118.1"/>
    <property type="molecule type" value="Genomic_DNA"/>
</dbReference>
<dbReference type="EMBL" id="X94335">
    <property type="protein sequence ID" value="CAA64049.1"/>
    <property type="molecule type" value="Genomic_DNA"/>
</dbReference>
<dbReference type="EMBL" id="Z75038">
    <property type="protein sequence ID" value="CAA99329.1"/>
    <property type="molecule type" value="Genomic_DNA"/>
</dbReference>
<dbReference type="EMBL" id="BK006948">
    <property type="protein sequence ID" value="DAA10904.2"/>
    <property type="molecule type" value="Genomic_DNA"/>
</dbReference>
<dbReference type="PIR" id="S60997">
    <property type="entry name" value="S60997"/>
</dbReference>
<dbReference type="RefSeq" id="NP_014773.4">
    <property type="nucleotide sequence ID" value="NM_001183549.4"/>
</dbReference>
<dbReference type="SMR" id="Q12375"/>
<dbReference type="BioGRID" id="34525">
    <property type="interactions" value="32"/>
</dbReference>
<dbReference type="DIP" id="DIP-8953N"/>
<dbReference type="FunCoup" id="Q12375">
    <property type="interactions" value="142"/>
</dbReference>
<dbReference type="IntAct" id="Q12375">
    <property type="interactions" value="1"/>
</dbReference>
<dbReference type="STRING" id="4932.YOR130C"/>
<dbReference type="TCDB" id="2.A.29.9.2">
    <property type="family name" value="the mitochondrial carrier (mc) family"/>
</dbReference>
<dbReference type="iPTMnet" id="Q12375"/>
<dbReference type="PaxDb" id="4932-YOR130C"/>
<dbReference type="PeptideAtlas" id="Q12375"/>
<dbReference type="EnsemblFungi" id="YOR130C_mRNA">
    <property type="protein sequence ID" value="YOR130C"/>
    <property type="gene ID" value="YOR130C"/>
</dbReference>
<dbReference type="GeneID" id="854297"/>
<dbReference type="KEGG" id="sce:YOR130C"/>
<dbReference type="AGR" id="SGD:S000005656"/>
<dbReference type="SGD" id="S000005656">
    <property type="gene designation" value="ORT1"/>
</dbReference>
<dbReference type="VEuPathDB" id="FungiDB:YOR130C"/>
<dbReference type="eggNOG" id="KOG0758">
    <property type="taxonomic scope" value="Eukaryota"/>
</dbReference>
<dbReference type="GeneTree" id="ENSGT00940000168956"/>
<dbReference type="HOGENOM" id="CLU_015166_16_3_1"/>
<dbReference type="InParanoid" id="Q12375"/>
<dbReference type="OMA" id="PIDCFRQ"/>
<dbReference type="OrthoDB" id="2139348at2759"/>
<dbReference type="BioCyc" id="YEAST:G3O-33654-MONOMER"/>
<dbReference type="Reactome" id="R-SCE-70635">
    <property type="pathway name" value="Urea cycle"/>
</dbReference>
<dbReference type="BioGRID-ORCS" id="854297">
    <property type="hits" value="9 hits in 10 CRISPR screens"/>
</dbReference>
<dbReference type="PRO" id="PR:Q12375"/>
<dbReference type="Proteomes" id="UP000002311">
    <property type="component" value="Chromosome XV"/>
</dbReference>
<dbReference type="RNAct" id="Q12375">
    <property type="molecule type" value="protein"/>
</dbReference>
<dbReference type="GO" id="GO:0005740">
    <property type="term" value="C:mitochondrial envelope"/>
    <property type="evidence" value="ECO:0000314"/>
    <property type="project" value="SGD"/>
</dbReference>
<dbReference type="GO" id="GO:0005743">
    <property type="term" value="C:mitochondrial inner membrane"/>
    <property type="evidence" value="ECO:0007669"/>
    <property type="project" value="UniProtKB-SubCell"/>
</dbReference>
<dbReference type="GO" id="GO:0005739">
    <property type="term" value="C:mitochondrion"/>
    <property type="evidence" value="ECO:0007005"/>
    <property type="project" value="SGD"/>
</dbReference>
<dbReference type="GO" id="GO:0000064">
    <property type="term" value="F:L-ornithine transmembrane transporter activity"/>
    <property type="evidence" value="ECO:0000314"/>
    <property type="project" value="SGD"/>
</dbReference>
<dbReference type="GO" id="GO:0022857">
    <property type="term" value="F:transmembrane transporter activity"/>
    <property type="evidence" value="ECO:0000318"/>
    <property type="project" value="GO_Central"/>
</dbReference>
<dbReference type="GO" id="GO:0006526">
    <property type="term" value="P:L-arginine biosynthetic process"/>
    <property type="evidence" value="ECO:0000315"/>
    <property type="project" value="SGD"/>
</dbReference>
<dbReference type="GO" id="GO:1990575">
    <property type="term" value="P:mitochondrial L-ornithine transmembrane transport"/>
    <property type="evidence" value="ECO:0000314"/>
    <property type="project" value="SGD"/>
</dbReference>
<dbReference type="FunFam" id="1.50.40.10:FF:000099">
    <property type="entry name" value="Mitochondrial carrier protein"/>
    <property type="match status" value="1"/>
</dbReference>
<dbReference type="Gene3D" id="1.50.40.10">
    <property type="entry name" value="Mitochondrial carrier domain"/>
    <property type="match status" value="1"/>
</dbReference>
<dbReference type="InterPro" id="IPR050567">
    <property type="entry name" value="Mitochondrial_Carrier"/>
</dbReference>
<dbReference type="InterPro" id="IPR018108">
    <property type="entry name" value="Mitochondrial_sb/sol_carrier"/>
</dbReference>
<dbReference type="InterPro" id="IPR023395">
    <property type="entry name" value="Mt_carrier_dom_sf"/>
</dbReference>
<dbReference type="PANTHER" id="PTHR45624">
    <property type="entry name" value="MITOCHONDRIAL BASIC AMINO ACIDS TRANSPORTER-RELATED"/>
    <property type="match status" value="1"/>
</dbReference>
<dbReference type="PANTHER" id="PTHR45624:SF31">
    <property type="entry name" value="MITOCHONDRIAL ORNITHINE TRANSPORTER 1"/>
    <property type="match status" value="1"/>
</dbReference>
<dbReference type="Pfam" id="PF00153">
    <property type="entry name" value="Mito_carr"/>
    <property type="match status" value="3"/>
</dbReference>
<dbReference type="SUPFAM" id="SSF103506">
    <property type="entry name" value="Mitochondrial carrier"/>
    <property type="match status" value="1"/>
</dbReference>
<dbReference type="PROSITE" id="PS50920">
    <property type="entry name" value="SOLCAR"/>
    <property type="match status" value="3"/>
</dbReference>
<reference key="1">
    <citation type="journal article" date="1996" name="J. Biol. Chem.">
        <title>The ARG11 gene of Saccharomyces cerevisiae encodes a mitochondrial integral membrane protein required for arginine biosynthesis.</title>
        <authorList>
            <person name="Crabeel M."/>
            <person name="Soetens O."/>
            <person name="de Rijcke M."/>
            <person name="Pratiwi R."/>
            <person name="Pankiewicz R."/>
        </authorList>
    </citation>
    <scope>NUCLEOTIDE SEQUENCE [GENOMIC DNA]</scope>
    <scope>CHARACTERIZATION</scope>
    <source>
        <strain>ATCC 28383 / FL100 / VTT C-80102</strain>
    </source>
</reference>
<reference key="2">
    <citation type="journal article" date="1996" name="Yeast">
        <title>Sequencing and analysis of 51 kb on the right arm of chromosome XV from Saccharomyces cerevisiae reveals 30 open reading frames.</title>
        <authorList>
            <person name="Wiemann S."/>
            <person name="Rechmann S."/>
            <person name="Benes V."/>
            <person name="Voss H."/>
            <person name="Schwager C."/>
            <person name="Vlcek C."/>
            <person name="Stegemann J."/>
            <person name="Zimmermann J."/>
            <person name="Erfle H."/>
            <person name="Paces V."/>
            <person name="Ansorge W."/>
        </authorList>
    </citation>
    <scope>NUCLEOTIDE SEQUENCE [GENOMIC DNA]</scope>
    <source>
        <strain>ATCC 96604 / S288c / FY1679</strain>
    </source>
</reference>
<reference key="3">
    <citation type="journal article" date="1997" name="Yeast">
        <title>DNA sequencing and analysis of 130 kb from yeast chromosome XV.</title>
        <authorList>
            <person name="Voss H."/>
            <person name="Benes V."/>
            <person name="Andrade M.A."/>
            <person name="Valencia A."/>
            <person name="Rechmann S."/>
            <person name="Teodoru C."/>
            <person name="Schwager C."/>
            <person name="Paces V."/>
            <person name="Sander C."/>
            <person name="Ansorge W."/>
        </authorList>
    </citation>
    <scope>NUCLEOTIDE SEQUENCE [GENOMIC DNA]</scope>
</reference>
<reference key="4">
    <citation type="journal article" date="1997" name="Nature">
        <title>The nucleotide sequence of Saccharomyces cerevisiae chromosome XV.</title>
        <authorList>
            <person name="Dujon B."/>
            <person name="Albermann K."/>
            <person name="Aldea M."/>
            <person name="Alexandraki D."/>
            <person name="Ansorge W."/>
            <person name="Arino J."/>
            <person name="Benes V."/>
            <person name="Bohn C."/>
            <person name="Bolotin-Fukuhara M."/>
            <person name="Bordonne R."/>
            <person name="Boyer J."/>
            <person name="Camasses A."/>
            <person name="Casamayor A."/>
            <person name="Casas C."/>
            <person name="Cheret G."/>
            <person name="Cziepluch C."/>
            <person name="Daignan-Fornier B."/>
            <person name="Dang V.-D."/>
            <person name="de Haan M."/>
            <person name="Delius H."/>
            <person name="Durand P."/>
            <person name="Fairhead C."/>
            <person name="Feldmann H."/>
            <person name="Gaillon L."/>
            <person name="Galisson F."/>
            <person name="Gamo F.-J."/>
            <person name="Gancedo C."/>
            <person name="Goffeau A."/>
            <person name="Goulding S.E."/>
            <person name="Grivell L.A."/>
            <person name="Habbig B."/>
            <person name="Hand N.J."/>
            <person name="Hani J."/>
            <person name="Hattenhorst U."/>
            <person name="Hebling U."/>
            <person name="Hernando Y."/>
            <person name="Herrero E."/>
            <person name="Heumann K."/>
            <person name="Hiesel R."/>
            <person name="Hilger F."/>
            <person name="Hofmann B."/>
            <person name="Hollenberg C.P."/>
            <person name="Hughes B."/>
            <person name="Jauniaux J.-C."/>
            <person name="Kalogeropoulos A."/>
            <person name="Katsoulou C."/>
            <person name="Kordes E."/>
            <person name="Lafuente M.J."/>
            <person name="Landt O."/>
            <person name="Louis E.J."/>
            <person name="Maarse A.C."/>
            <person name="Madania A."/>
            <person name="Mannhaupt G."/>
            <person name="Marck C."/>
            <person name="Martin R.P."/>
            <person name="Mewes H.-W."/>
            <person name="Michaux G."/>
            <person name="Paces V."/>
            <person name="Parle-McDermott A.G."/>
            <person name="Pearson B.M."/>
            <person name="Perrin A."/>
            <person name="Pettersson B."/>
            <person name="Poch O."/>
            <person name="Pohl T.M."/>
            <person name="Poirey R."/>
            <person name="Portetelle D."/>
            <person name="Pujol A."/>
            <person name="Purnelle B."/>
            <person name="Ramezani Rad M."/>
            <person name="Rechmann S."/>
            <person name="Schwager C."/>
            <person name="Schweizer M."/>
            <person name="Sor F."/>
            <person name="Sterky F."/>
            <person name="Tarassov I.A."/>
            <person name="Teodoru C."/>
            <person name="Tettelin H."/>
            <person name="Thierry A."/>
            <person name="Tobiasch E."/>
            <person name="Tzermia M."/>
            <person name="Uhlen M."/>
            <person name="Unseld M."/>
            <person name="Valens M."/>
            <person name="Vandenbol M."/>
            <person name="Vetter I."/>
            <person name="Vlcek C."/>
            <person name="Voet M."/>
            <person name="Volckaert G."/>
            <person name="Voss H."/>
            <person name="Wambutt R."/>
            <person name="Wedler H."/>
            <person name="Wiemann S."/>
            <person name="Winsor B."/>
            <person name="Wolfe K.H."/>
            <person name="Zollner A."/>
            <person name="Zumstein E."/>
            <person name="Kleine K."/>
        </authorList>
    </citation>
    <scope>NUCLEOTIDE SEQUENCE [LARGE SCALE GENOMIC DNA]</scope>
    <source>
        <strain>ATCC 204508 / S288c</strain>
    </source>
</reference>
<reference key="5">
    <citation type="journal article" date="2014" name="G3 (Bethesda)">
        <title>The reference genome sequence of Saccharomyces cerevisiae: Then and now.</title>
        <authorList>
            <person name="Engel S.R."/>
            <person name="Dietrich F.S."/>
            <person name="Fisk D.G."/>
            <person name="Binkley G."/>
            <person name="Balakrishnan R."/>
            <person name="Costanzo M.C."/>
            <person name="Dwight S.S."/>
            <person name="Hitz B.C."/>
            <person name="Karra K."/>
            <person name="Nash R.S."/>
            <person name="Weng S."/>
            <person name="Wong E.D."/>
            <person name="Lloyd P."/>
            <person name="Skrzypek M.S."/>
            <person name="Miyasato S.R."/>
            <person name="Simison M."/>
            <person name="Cherry J.M."/>
        </authorList>
    </citation>
    <scope>GENOME REANNOTATION</scope>
    <scope>SEQUENCE REVISION TO 105</scope>
    <source>
        <strain>ATCC 204508 / S288c</strain>
    </source>
</reference>
<reference key="6">
    <citation type="journal article" date="1997" name="FEBS Lett.">
        <title>Identification of the yeast ARG-11 gene as a mitochondrial ornithine carrier involved in arginine biosynthesis.</title>
        <authorList>
            <person name="Palmieri L."/>
            <person name="De Marco V."/>
            <person name="Iacobazzi V."/>
            <person name="Palmieri F."/>
            <person name="Runswick M.J."/>
            <person name="Walker J.E."/>
        </authorList>
    </citation>
    <scope>FUNCTION</scope>
</reference>
<reference key="7">
    <citation type="journal article" date="2003" name="Nature">
        <title>Global analysis of protein localization in budding yeast.</title>
        <authorList>
            <person name="Huh W.-K."/>
            <person name="Falvo J.V."/>
            <person name="Gerke L.C."/>
            <person name="Carroll A.S."/>
            <person name="Howson R.W."/>
            <person name="Weissman J.S."/>
            <person name="O'Shea E.K."/>
        </authorList>
    </citation>
    <scope>SUBCELLULAR LOCATION [LARGE SCALE ANALYSIS]</scope>
</reference>
<reference key="8">
    <citation type="journal article" date="2003" name="Nature">
        <title>Global analysis of protein expression in yeast.</title>
        <authorList>
            <person name="Ghaemmaghami S."/>
            <person name="Huh W.-K."/>
            <person name="Bower K."/>
            <person name="Howson R.W."/>
            <person name="Belle A."/>
            <person name="Dephoure N."/>
            <person name="O'Shea E.K."/>
            <person name="Weissman J.S."/>
        </authorList>
    </citation>
    <scope>LEVEL OF PROTEIN EXPRESSION [LARGE SCALE ANALYSIS]</scope>
</reference>
<comment type="function">
    <text evidence="4">Required for arginine biosynthesis. Transports ornithine synthesized from glutamate in the mitochondrial matrix to the cytosol, where it is converted to arginine.</text>
</comment>
<comment type="subcellular location">
    <subcellularLocation>
        <location evidence="2">Mitochondrion inner membrane</location>
        <topology evidence="2">Multi-pass membrane protein</topology>
    </subcellularLocation>
</comment>
<comment type="miscellaneous">
    <text evidence="3">Present with 432 molecules/cell in log phase SD medium.</text>
</comment>
<comment type="similarity">
    <text evidence="5">Belongs to the mitochondrial carrier (TC 2.A.29) family.</text>
</comment>
<protein>
    <recommendedName>
        <fullName>Mitochondrial ornithine transporter 1</fullName>
    </recommendedName>
</protein>
<feature type="chain" id="PRO_0000090684" description="Mitochondrial ornithine transporter 1">
    <location>
        <begin position="1"/>
        <end position="292"/>
    </location>
</feature>
<feature type="transmembrane region" description="Helical; Name=1" evidence="1">
    <location>
        <begin position="14"/>
        <end position="34"/>
    </location>
</feature>
<feature type="transmembrane region" description="Helical; Name=2" evidence="1">
    <location>
        <begin position="69"/>
        <end position="89"/>
    </location>
</feature>
<feature type="transmembrane region" description="Helical; Name=3" evidence="1">
    <location>
        <begin position="104"/>
        <end position="124"/>
    </location>
</feature>
<feature type="transmembrane region" description="Helical; Name=4" evidence="1">
    <location>
        <begin position="171"/>
        <end position="187"/>
    </location>
</feature>
<feature type="transmembrane region" description="Helical; Name=5" evidence="1">
    <location>
        <begin position="213"/>
        <end position="233"/>
    </location>
</feature>
<feature type="transmembrane region" description="Helical; Name=6" evidence="1">
    <location>
        <begin position="267"/>
        <end position="287"/>
    </location>
</feature>
<feature type="repeat" description="Solcar 1">
    <location>
        <begin position="11"/>
        <end position="97"/>
    </location>
</feature>
<feature type="repeat" description="Solcar 2">
    <location>
        <begin position="105"/>
        <end position="196"/>
    </location>
</feature>
<feature type="repeat" description="Solcar 3">
    <location>
        <begin position="211"/>
        <end position="292"/>
    </location>
</feature>
<feature type="sequence conflict" description="In Ref. 2; CAA62118, 3; CAA64049 and 4; CAA99329." evidence="5" ref="2 3 4">
    <original>S</original>
    <variation>F</variation>
    <location>
        <position position="105"/>
    </location>
</feature>
<organism>
    <name type="scientific">Saccharomyces cerevisiae (strain ATCC 204508 / S288c)</name>
    <name type="common">Baker's yeast</name>
    <dbReference type="NCBI Taxonomy" id="559292"/>
    <lineage>
        <taxon>Eukaryota</taxon>
        <taxon>Fungi</taxon>
        <taxon>Dikarya</taxon>
        <taxon>Ascomycota</taxon>
        <taxon>Saccharomycotina</taxon>
        <taxon>Saccharomycetes</taxon>
        <taxon>Saccharomycetales</taxon>
        <taxon>Saccharomycetaceae</taxon>
        <taxon>Saccharomyces</taxon>
    </lineage>
</organism>
<sequence>MEDSKKKGLIEGAILDIINGSIAGACGKVIEFPFDTVKVRLQTQASNVFPTTWSCIKFTYQNEGIARGFFQGIASPLVGACLENATLFVSYNQCSKFLEKHTNVSPLGQILISGGVAGSCASLVLTPVELVKCKLQVANLQVASAKTKHTKVLPTIKAIITERGLAGLWQGQSGTFIRESFGGVAWFATYEIVKKSLKDRHSLDDPKRDESKIWELLISGGSAGLAFNASIFPADTVKSVMQTEHISLTNAVKKIFGKFGLKGFYRGLGITLFRAVPANAAVFYIFETLSAL</sequence>
<accession>Q12375</accession>
<accession>D6W2I8</accession>
<accession>Q92273</accession>
<name>ORT1_YEAST</name>
<gene>
    <name type="primary">ORT1</name>
    <name type="synonym">ARG11</name>
    <name type="ordered locus">YOR130C</name>
    <name type="ORF">O3299</name>
    <name type="ORF">YOR3299C</name>
</gene>
<proteinExistence type="evidence at protein level"/>